<proteinExistence type="inferred from homology"/>
<protein>
    <recommendedName>
        <fullName evidence="2">Flap endonuclease 1</fullName>
        <shortName evidence="2">FEN-1</shortName>
        <ecNumber evidence="2">3.1.-.-</ecNumber>
    </recommendedName>
    <alternativeName>
        <fullName evidence="2">Flap structure-specific endonuclease 1</fullName>
    </alternativeName>
</protein>
<reference key="1">
    <citation type="journal article" date="2007" name="Proc. Natl. Acad. Sci. U.S.A.">
        <title>Genomic and metabolic adaptations of Methanobrevibacter smithii to the human gut.</title>
        <authorList>
            <person name="Samuel B.S."/>
            <person name="Hansen E.E."/>
            <person name="Manchester J.K."/>
            <person name="Coutinho P.M."/>
            <person name="Henrissat B."/>
            <person name="Fulton R."/>
            <person name="Latreille P."/>
            <person name="Kim K."/>
            <person name="Wilson R.K."/>
            <person name="Gordon J.I."/>
        </authorList>
    </citation>
    <scope>NUCLEOTIDE SEQUENCE [LARGE SCALE GENOMIC DNA]</scope>
    <source>
        <strain>ATCC 35061 / DSM 861 / OCM 144 / PS</strain>
    </source>
</reference>
<comment type="function">
    <text evidence="1">Structure-specific nuclease with 5'-flap endonuclease and 5'-3' exonuclease activities involved in DNA replication and repair. During DNA replication, cleaves the 5'-overhanging flap structure that is generated by displacement synthesis when DNA polymerase encounters the 5'-end of a downstream Okazaki fragment. Binds the unpaired 3'-DNA end and kinks the DNA to facilitate 5' cleavage specificity. Cleaves one nucleotide into the double-stranded DNA from the junction in flap DNA, leaving a nick for ligation. Also involved in the base excision repair (BER) pathway. Acts as a genome stabilization factor that prevents flaps from equilibrating into structures that lead to duplications and deletions. Also possesses 5'-3' exonuclease activity on nicked or gapped double-stranded DNA (By similarity).</text>
</comment>
<comment type="cofactor">
    <cofactor evidence="2">
        <name>Mg(2+)</name>
        <dbReference type="ChEBI" id="CHEBI:18420"/>
    </cofactor>
    <text evidence="2">Binds 2 magnesium ions per subunit. They probably participate in the reaction catalyzed by the enzyme. May bind an additional third magnesium ion after substrate binding.</text>
</comment>
<comment type="subunit">
    <text evidence="2">Interacts with PCNA. PCNA stimulates the nuclease activity without altering cleavage specificity.</text>
</comment>
<comment type="similarity">
    <text evidence="2">Belongs to the XPG/RAD2 endonuclease family. FEN1 subfamily.</text>
</comment>
<sequence>MGVKLKDIIQPEQIDFKDLKGRAISIDAFNTLYQFLSTIRQRDGRPLSDSNGNITSHLSGILYRNSSMIEKDIKPIYVFDGTPSYLKQETIDQRRQTREESEKKWKEALAKQDTQEARKYAMRSSKLSPYIIESSKKLLTMMGIPYIEAYGEGEAQAAYLVENGDAWAVASQDYDCLLFGAKRVVRNLAINSNLGDLEYYNLKRVLDELDINREQLIDMGILIGTDFSEGLKGVGAKTALKLAKKGELENKLAKLQEESSHDISEVREIFLNHNVNTNYKIRWKKPAKNDIIDFLCEEHGFSQDRVSKACDKLKNLNSSQKSLEDWF</sequence>
<accession>A5UL52</accession>
<name>FEN_METS3</name>
<dbReference type="EC" id="3.1.-.-" evidence="2"/>
<dbReference type="EMBL" id="CP000678">
    <property type="protein sequence ID" value="ABQ86930.1"/>
    <property type="molecule type" value="Genomic_DNA"/>
</dbReference>
<dbReference type="RefSeq" id="WP_011954068.1">
    <property type="nucleotide sequence ID" value="NZ_CP117965.1"/>
</dbReference>
<dbReference type="SMR" id="A5UL52"/>
<dbReference type="STRING" id="420247.Msm_0725"/>
<dbReference type="EnsemblBacteria" id="ABQ86930">
    <property type="protein sequence ID" value="ABQ86930"/>
    <property type="gene ID" value="Msm_0725"/>
</dbReference>
<dbReference type="GeneID" id="78817353"/>
<dbReference type="KEGG" id="msi:Msm_0725"/>
<dbReference type="PATRIC" id="fig|420247.28.peg.722"/>
<dbReference type="eggNOG" id="arCOG04050">
    <property type="taxonomic scope" value="Archaea"/>
</dbReference>
<dbReference type="HOGENOM" id="CLU_032444_0_0_2"/>
<dbReference type="Proteomes" id="UP000001992">
    <property type="component" value="Chromosome"/>
</dbReference>
<dbReference type="GO" id="GO:0008409">
    <property type="term" value="F:5'-3' exonuclease activity"/>
    <property type="evidence" value="ECO:0007669"/>
    <property type="project" value="UniProtKB-UniRule"/>
</dbReference>
<dbReference type="GO" id="GO:0017108">
    <property type="term" value="F:5'-flap endonuclease activity"/>
    <property type="evidence" value="ECO:0007669"/>
    <property type="project" value="UniProtKB-UniRule"/>
</dbReference>
<dbReference type="GO" id="GO:0003677">
    <property type="term" value="F:DNA binding"/>
    <property type="evidence" value="ECO:0007669"/>
    <property type="project" value="UniProtKB-UniRule"/>
</dbReference>
<dbReference type="GO" id="GO:0000287">
    <property type="term" value="F:magnesium ion binding"/>
    <property type="evidence" value="ECO:0007669"/>
    <property type="project" value="UniProtKB-UniRule"/>
</dbReference>
<dbReference type="GO" id="GO:0006281">
    <property type="term" value="P:DNA repair"/>
    <property type="evidence" value="ECO:0007669"/>
    <property type="project" value="UniProtKB-UniRule"/>
</dbReference>
<dbReference type="GO" id="GO:0043137">
    <property type="term" value="P:DNA replication, removal of RNA primer"/>
    <property type="evidence" value="ECO:0007669"/>
    <property type="project" value="UniProtKB-UniRule"/>
</dbReference>
<dbReference type="CDD" id="cd09867">
    <property type="entry name" value="PIN_FEN1"/>
    <property type="match status" value="1"/>
</dbReference>
<dbReference type="FunFam" id="3.40.50.1010:FF:000016">
    <property type="entry name" value="Flap endonuclease 1"/>
    <property type="match status" value="1"/>
</dbReference>
<dbReference type="Gene3D" id="1.10.150.20">
    <property type="entry name" value="5' to 3' exonuclease, C-terminal subdomain"/>
    <property type="match status" value="1"/>
</dbReference>
<dbReference type="Gene3D" id="3.40.50.1010">
    <property type="entry name" value="5'-nuclease"/>
    <property type="match status" value="1"/>
</dbReference>
<dbReference type="HAMAP" id="MF_00614">
    <property type="entry name" value="Fen"/>
    <property type="match status" value="1"/>
</dbReference>
<dbReference type="InterPro" id="IPR036279">
    <property type="entry name" value="5-3_exonuclease_C_sf"/>
</dbReference>
<dbReference type="InterPro" id="IPR023426">
    <property type="entry name" value="Flap_endonuc"/>
</dbReference>
<dbReference type="InterPro" id="IPR019973">
    <property type="entry name" value="Flap_endonuc_arc"/>
</dbReference>
<dbReference type="InterPro" id="IPR008918">
    <property type="entry name" value="HhH2"/>
</dbReference>
<dbReference type="InterPro" id="IPR029060">
    <property type="entry name" value="PIN-like_dom_sf"/>
</dbReference>
<dbReference type="InterPro" id="IPR006086">
    <property type="entry name" value="XPG-I_dom"/>
</dbReference>
<dbReference type="InterPro" id="IPR006084">
    <property type="entry name" value="XPG/Rad2"/>
</dbReference>
<dbReference type="InterPro" id="IPR019974">
    <property type="entry name" value="XPG_CS"/>
</dbReference>
<dbReference type="InterPro" id="IPR006085">
    <property type="entry name" value="XPG_DNA_repair_N"/>
</dbReference>
<dbReference type="NCBIfam" id="TIGR03674">
    <property type="entry name" value="fen_arch"/>
    <property type="match status" value="1"/>
</dbReference>
<dbReference type="PANTHER" id="PTHR11081:SF9">
    <property type="entry name" value="FLAP ENDONUCLEASE 1"/>
    <property type="match status" value="1"/>
</dbReference>
<dbReference type="PANTHER" id="PTHR11081">
    <property type="entry name" value="FLAP ENDONUCLEASE FAMILY MEMBER"/>
    <property type="match status" value="1"/>
</dbReference>
<dbReference type="Pfam" id="PF00867">
    <property type="entry name" value="XPG_I"/>
    <property type="match status" value="1"/>
</dbReference>
<dbReference type="Pfam" id="PF00752">
    <property type="entry name" value="XPG_N"/>
    <property type="match status" value="1"/>
</dbReference>
<dbReference type="PRINTS" id="PR00853">
    <property type="entry name" value="XPGRADSUPER"/>
</dbReference>
<dbReference type="SMART" id="SM00279">
    <property type="entry name" value="HhH2"/>
    <property type="match status" value="1"/>
</dbReference>
<dbReference type="SMART" id="SM00484">
    <property type="entry name" value="XPGI"/>
    <property type="match status" value="1"/>
</dbReference>
<dbReference type="SMART" id="SM00485">
    <property type="entry name" value="XPGN"/>
    <property type="match status" value="1"/>
</dbReference>
<dbReference type="SUPFAM" id="SSF47807">
    <property type="entry name" value="5' to 3' exonuclease, C-terminal subdomain"/>
    <property type="match status" value="1"/>
</dbReference>
<dbReference type="SUPFAM" id="SSF88723">
    <property type="entry name" value="PIN domain-like"/>
    <property type="match status" value="1"/>
</dbReference>
<dbReference type="PROSITE" id="PS00841">
    <property type="entry name" value="XPG_1"/>
    <property type="match status" value="1"/>
</dbReference>
<feature type="chain" id="PRO_1000061327" description="Flap endonuclease 1">
    <location>
        <begin position="1"/>
        <end position="327"/>
    </location>
</feature>
<feature type="region of interest" description="N-domain">
    <location>
        <begin position="1"/>
        <end position="98"/>
    </location>
</feature>
<feature type="region of interest" description="I-domain">
    <location>
        <begin position="116"/>
        <end position="246"/>
    </location>
</feature>
<feature type="region of interest" description="Interaction with PCNA" evidence="2">
    <location>
        <begin position="319"/>
        <end position="327"/>
    </location>
</feature>
<feature type="binding site" evidence="2">
    <location>
        <position position="27"/>
    </location>
    <ligand>
        <name>Mg(2+)</name>
        <dbReference type="ChEBI" id="CHEBI:18420"/>
        <label>1</label>
    </ligand>
</feature>
<feature type="binding site" evidence="2">
    <location>
        <position position="80"/>
    </location>
    <ligand>
        <name>Mg(2+)</name>
        <dbReference type="ChEBI" id="CHEBI:18420"/>
        <label>1</label>
    </ligand>
</feature>
<feature type="binding site" evidence="2">
    <location>
        <position position="152"/>
    </location>
    <ligand>
        <name>Mg(2+)</name>
        <dbReference type="ChEBI" id="CHEBI:18420"/>
        <label>1</label>
    </ligand>
</feature>
<feature type="binding site" evidence="2">
    <location>
        <position position="154"/>
    </location>
    <ligand>
        <name>Mg(2+)</name>
        <dbReference type="ChEBI" id="CHEBI:18420"/>
        <label>1</label>
    </ligand>
</feature>
<feature type="binding site" evidence="2">
    <location>
        <position position="173"/>
    </location>
    <ligand>
        <name>Mg(2+)</name>
        <dbReference type="ChEBI" id="CHEBI:18420"/>
        <label>2</label>
    </ligand>
</feature>
<feature type="binding site" evidence="2">
    <location>
        <position position="175"/>
    </location>
    <ligand>
        <name>Mg(2+)</name>
        <dbReference type="ChEBI" id="CHEBI:18420"/>
        <label>2</label>
    </ligand>
</feature>
<feature type="binding site" evidence="2">
    <location>
        <position position="226"/>
    </location>
    <ligand>
        <name>Mg(2+)</name>
        <dbReference type="ChEBI" id="CHEBI:18420"/>
        <label>2</label>
    </ligand>
</feature>
<keyword id="KW-0227">DNA damage</keyword>
<keyword id="KW-0234">DNA repair</keyword>
<keyword id="KW-0235">DNA replication</keyword>
<keyword id="KW-0255">Endonuclease</keyword>
<keyword id="KW-0269">Exonuclease</keyword>
<keyword id="KW-0378">Hydrolase</keyword>
<keyword id="KW-0460">Magnesium</keyword>
<keyword id="KW-0479">Metal-binding</keyword>
<keyword id="KW-0540">Nuclease</keyword>
<evidence type="ECO:0000250" key="1"/>
<evidence type="ECO:0000255" key="2">
    <source>
        <dbReference type="HAMAP-Rule" id="MF_00614"/>
    </source>
</evidence>
<gene>
    <name evidence="2" type="primary">fen</name>
    <name type="ordered locus">Msm_0725</name>
</gene>
<organism>
    <name type="scientific">Methanobrevibacter smithii (strain ATCC 35061 / DSM 861 / OCM 144 / PS)</name>
    <dbReference type="NCBI Taxonomy" id="420247"/>
    <lineage>
        <taxon>Archaea</taxon>
        <taxon>Methanobacteriati</taxon>
        <taxon>Methanobacteriota</taxon>
        <taxon>Methanomada group</taxon>
        <taxon>Methanobacteria</taxon>
        <taxon>Methanobacteriales</taxon>
        <taxon>Methanobacteriaceae</taxon>
        <taxon>Methanobrevibacter</taxon>
    </lineage>
</organism>